<name>TOLB_CHLT2</name>
<sequence>MKGSVVFLRSLLCLLCLLPSTLHCEDLEIHVRSESSLLPIAVSLLSSPKDSRQASYLASLRDLFARDLALGDLLAPTKELAPQTIFIEASYPELIFSLKKEGKGSQKIFSLELSGDPSKDHQAIHEAADRIHFLLTRVPGISSGKIIFSLCATNSSTELKQGELWSVDYDGQHLYPLTNEHSLSVTPTWMHISHIPAYMYVSYKLGVPKIFLNTLNQPAGKKILAMQGNQFMPTFSPKTKLLAFISDRDGNPDLFVQSFSLATGAIGTPKKLLNEAFGTQGNPSFSPDGTRLVFVSNKDGTPRIYQMQISPEQHSPRLLTKKYRNSSCPTWSPDGKKIAFCSVIKGVRQICVYDLASGRDEQLTTSTEHKESPSWAADSNHLVYSAGSSNTSELFLLSLITKKSRKIVIGSGEKRFPCWGAFPSQHIKKTS</sequence>
<reference key="1">
    <citation type="journal article" date="2008" name="Genome Res.">
        <title>Chlamydia trachomatis: genome sequence analysis of lymphogranuloma venereum isolates.</title>
        <authorList>
            <person name="Thomson N.R."/>
            <person name="Holden M.T.G."/>
            <person name="Carder C."/>
            <person name="Lennard N."/>
            <person name="Lockey S.J."/>
            <person name="Marsh P."/>
            <person name="Skipp P."/>
            <person name="O'Connor C.D."/>
            <person name="Goodhead I."/>
            <person name="Norbertzcak H."/>
            <person name="Harris B."/>
            <person name="Ormond D."/>
            <person name="Rance R."/>
            <person name="Quail M.A."/>
            <person name="Parkhill J."/>
            <person name="Stephens R.S."/>
            <person name="Clarke I.N."/>
        </authorList>
    </citation>
    <scope>NUCLEOTIDE SEQUENCE [LARGE SCALE GENOMIC DNA]</scope>
    <source>
        <strain>ATCC VR-902B / DSM 19102 / 434/Bu</strain>
    </source>
</reference>
<dbReference type="EMBL" id="AM884176">
    <property type="protein sequence ID" value="CAP04299.1"/>
    <property type="molecule type" value="Genomic_DNA"/>
</dbReference>
<dbReference type="RefSeq" id="WP_009873932.1">
    <property type="nucleotide sequence ID" value="NC_010287.1"/>
</dbReference>
<dbReference type="RefSeq" id="YP_001654931.1">
    <property type="nucleotide sequence ID" value="NC_010287.1"/>
</dbReference>
<dbReference type="SMR" id="B0B8H3"/>
<dbReference type="KEGG" id="ctb:CTL0862"/>
<dbReference type="PATRIC" id="fig|471472.4.peg.924"/>
<dbReference type="HOGENOM" id="CLU_635688_0_0_0"/>
<dbReference type="Proteomes" id="UP001154402">
    <property type="component" value="Chromosome"/>
</dbReference>
<dbReference type="GO" id="GO:0042597">
    <property type="term" value="C:periplasmic space"/>
    <property type="evidence" value="ECO:0007669"/>
    <property type="project" value="UniProtKB-SubCell"/>
</dbReference>
<dbReference type="Gene3D" id="2.120.10.30">
    <property type="entry name" value="TolB, C-terminal domain"/>
    <property type="match status" value="1"/>
</dbReference>
<dbReference type="InterPro" id="IPR011042">
    <property type="entry name" value="6-blade_b-propeller_TolB-like"/>
</dbReference>
<dbReference type="InterPro" id="IPR011659">
    <property type="entry name" value="PD40"/>
</dbReference>
<dbReference type="NCBIfam" id="NF002183">
    <property type="entry name" value="PRK01029.1"/>
    <property type="match status" value="1"/>
</dbReference>
<dbReference type="PANTHER" id="PTHR36842:SF1">
    <property type="entry name" value="PROTEIN TOLB"/>
    <property type="match status" value="1"/>
</dbReference>
<dbReference type="PANTHER" id="PTHR36842">
    <property type="entry name" value="PROTEIN TOLB HOMOLOG"/>
    <property type="match status" value="1"/>
</dbReference>
<dbReference type="Pfam" id="PF07676">
    <property type="entry name" value="PD40"/>
    <property type="match status" value="4"/>
</dbReference>
<dbReference type="SUPFAM" id="SSF82171">
    <property type="entry name" value="DPP6 N-terminal domain-like"/>
    <property type="match status" value="1"/>
</dbReference>
<accession>B0B8H3</accession>
<evidence type="ECO:0000250" key="1">
    <source>
        <dbReference type="UniProtKB" id="P0A855"/>
    </source>
</evidence>
<evidence type="ECO:0000255" key="2"/>
<evidence type="ECO:0000305" key="3"/>
<keyword id="KW-0574">Periplasm</keyword>
<keyword id="KW-0732">Signal</keyword>
<protein>
    <recommendedName>
        <fullName evidence="3">Protein TolB homolog</fullName>
    </recommendedName>
</protein>
<proteinExistence type="inferred from homology"/>
<gene>
    <name type="primary">tolB</name>
    <name type="ordered locus">CTL0862</name>
</gene>
<organism>
    <name type="scientific">Chlamydia trachomatis serovar L2 (strain ATCC VR-902B / DSM 19102 / 434/Bu)</name>
    <dbReference type="NCBI Taxonomy" id="471472"/>
    <lineage>
        <taxon>Bacteria</taxon>
        <taxon>Pseudomonadati</taxon>
        <taxon>Chlamydiota</taxon>
        <taxon>Chlamydiia</taxon>
        <taxon>Chlamydiales</taxon>
        <taxon>Chlamydiaceae</taxon>
        <taxon>Chlamydia/Chlamydophila group</taxon>
        <taxon>Chlamydia</taxon>
    </lineage>
</organism>
<comment type="subcellular location">
    <subcellularLocation>
        <location evidence="1">Periplasm</location>
    </subcellularLocation>
</comment>
<comment type="similarity">
    <text evidence="3">Belongs to the TolB family.</text>
</comment>
<feature type="signal peptide" evidence="2">
    <location>
        <begin position="1"/>
        <end position="24"/>
    </location>
</feature>
<feature type="chain" id="PRO_1000131519" description="Protein TolB homolog" evidence="2">
    <location>
        <begin position="25"/>
        <end position="431"/>
    </location>
</feature>